<accession>Q9D454</accession>
<organism>
    <name type="scientific">Mus musculus</name>
    <name type="common">Mouse</name>
    <dbReference type="NCBI Taxonomy" id="10090"/>
    <lineage>
        <taxon>Eukaryota</taxon>
        <taxon>Metazoa</taxon>
        <taxon>Chordata</taxon>
        <taxon>Craniata</taxon>
        <taxon>Vertebrata</taxon>
        <taxon>Euteleostomi</taxon>
        <taxon>Mammalia</taxon>
        <taxon>Eutheria</taxon>
        <taxon>Euarchontoglires</taxon>
        <taxon>Glires</taxon>
        <taxon>Rodentia</taxon>
        <taxon>Myomorpha</taxon>
        <taxon>Muroidea</taxon>
        <taxon>Muridae</taxon>
        <taxon>Murinae</taxon>
        <taxon>Mus</taxon>
        <taxon>Mus</taxon>
    </lineage>
</organism>
<keyword id="KW-0597">Phosphoprotein</keyword>
<keyword id="KW-1185">Reference proteome</keyword>
<sequence length="513" mass="55249">MGSSEEQSVPGDDFYEESGDLNTGLSLVLRPAKSNEGESSLSSPKGSKLTLVSQLEASENPSVVLWAGEYCPDSLVPEEERVGSPMDEKVVGLDFLSQPSVETTATGQQVTNLETKGAREHPSPESVCAETEAGSIRRAPQASEEAKFAASAGTFFPKGLEQSRSWVTPRKSTTSRMVIGENVHHPTSEPEPLDELNEVQMMRVTICLKDGNHGNQAKNSGPAETGDLARHSNVQTRDSFMRMPSSLLVSTTRGLTSGVERQASKEPEPFSSKKKQGTLWGKGGSKSSYPEAAAGIGALPKASPRKKMAQKKKPLWDASAVTLGRAFHQWGQRLKSAPAEPATFPPISGVGLPGRSNKCSLLPLRPKQCKNLYTGKRSGAKKTKELQLVAKEDTDSTRDPSSQVQFPTHRAEPPCQSVHQEFNSGDINARSLQDAGNSQSSALNQRGIMSKKSVLSGDQEEPVGLPAPDSEILQLPGTQGCPRCPELQKEIEDLRKQLSALQAVSEKFQTHLS</sequence>
<proteinExistence type="evidence at protein level"/>
<reference key="1">
    <citation type="journal article" date="2005" name="Science">
        <title>The transcriptional landscape of the mammalian genome.</title>
        <authorList>
            <person name="Carninci P."/>
            <person name="Kasukawa T."/>
            <person name="Katayama S."/>
            <person name="Gough J."/>
            <person name="Frith M.C."/>
            <person name="Maeda N."/>
            <person name="Oyama R."/>
            <person name="Ravasi T."/>
            <person name="Lenhard B."/>
            <person name="Wells C."/>
            <person name="Kodzius R."/>
            <person name="Shimokawa K."/>
            <person name="Bajic V.B."/>
            <person name="Brenner S.E."/>
            <person name="Batalov S."/>
            <person name="Forrest A.R."/>
            <person name="Zavolan M."/>
            <person name="Davis M.J."/>
            <person name="Wilming L.G."/>
            <person name="Aidinis V."/>
            <person name="Allen J.E."/>
            <person name="Ambesi-Impiombato A."/>
            <person name="Apweiler R."/>
            <person name="Aturaliya R.N."/>
            <person name="Bailey T.L."/>
            <person name="Bansal M."/>
            <person name="Baxter L."/>
            <person name="Beisel K.W."/>
            <person name="Bersano T."/>
            <person name="Bono H."/>
            <person name="Chalk A.M."/>
            <person name="Chiu K.P."/>
            <person name="Choudhary V."/>
            <person name="Christoffels A."/>
            <person name="Clutterbuck D.R."/>
            <person name="Crowe M.L."/>
            <person name="Dalla E."/>
            <person name="Dalrymple B.P."/>
            <person name="de Bono B."/>
            <person name="Della Gatta G."/>
            <person name="di Bernardo D."/>
            <person name="Down T."/>
            <person name="Engstrom P."/>
            <person name="Fagiolini M."/>
            <person name="Faulkner G."/>
            <person name="Fletcher C.F."/>
            <person name="Fukushima T."/>
            <person name="Furuno M."/>
            <person name="Futaki S."/>
            <person name="Gariboldi M."/>
            <person name="Georgii-Hemming P."/>
            <person name="Gingeras T.R."/>
            <person name="Gojobori T."/>
            <person name="Green R.E."/>
            <person name="Gustincich S."/>
            <person name="Harbers M."/>
            <person name="Hayashi Y."/>
            <person name="Hensch T.K."/>
            <person name="Hirokawa N."/>
            <person name="Hill D."/>
            <person name="Huminiecki L."/>
            <person name="Iacono M."/>
            <person name="Ikeo K."/>
            <person name="Iwama A."/>
            <person name="Ishikawa T."/>
            <person name="Jakt M."/>
            <person name="Kanapin A."/>
            <person name="Katoh M."/>
            <person name="Kawasawa Y."/>
            <person name="Kelso J."/>
            <person name="Kitamura H."/>
            <person name="Kitano H."/>
            <person name="Kollias G."/>
            <person name="Krishnan S.P."/>
            <person name="Kruger A."/>
            <person name="Kummerfeld S.K."/>
            <person name="Kurochkin I.V."/>
            <person name="Lareau L.F."/>
            <person name="Lazarevic D."/>
            <person name="Lipovich L."/>
            <person name="Liu J."/>
            <person name="Liuni S."/>
            <person name="McWilliam S."/>
            <person name="Madan Babu M."/>
            <person name="Madera M."/>
            <person name="Marchionni L."/>
            <person name="Matsuda H."/>
            <person name="Matsuzawa S."/>
            <person name="Miki H."/>
            <person name="Mignone F."/>
            <person name="Miyake S."/>
            <person name="Morris K."/>
            <person name="Mottagui-Tabar S."/>
            <person name="Mulder N."/>
            <person name="Nakano N."/>
            <person name="Nakauchi H."/>
            <person name="Ng P."/>
            <person name="Nilsson R."/>
            <person name="Nishiguchi S."/>
            <person name="Nishikawa S."/>
            <person name="Nori F."/>
            <person name="Ohara O."/>
            <person name="Okazaki Y."/>
            <person name="Orlando V."/>
            <person name="Pang K.C."/>
            <person name="Pavan W.J."/>
            <person name="Pavesi G."/>
            <person name="Pesole G."/>
            <person name="Petrovsky N."/>
            <person name="Piazza S."/>
            <person name="Reed J."/>
            <person name="Reid J.F."/>
            <person name="Ring B.Z."/>
            <person name="Ringwald M."/>
            <person name="Rost B."/>
            <person name="Ruan Y."/>
            <person name="Salzberg S.L."/>
            <person name="Sandelin A."/>
            <person name="Schneider C."/>
            <person name="Schoenbach C."/>
            <person name="Sekiguchi K."/>
            <person name="Semple C.A."/>
            <person name="Seno S."/>
            <person name="Sessa L."/>
            <person name="Sheng Y."/>
            <person name="Shibata Y."/>
            <person name="Shimada H."/>
            <person name="Shimada K."/>
            <person name="Silva D."/>
            <person name="Sinclair B."/>
            <person name="Sperling S."/>
            <person name="Stupka E."/>
            <person name="Sugiura K."/>
            <person name="Sultana R."/>
            <person name="Takenaka Y."/>
            <person name="Taki K."/>
            <person name="Tammoja K."/>
            <person name="Tan S.L."/>
            <person name="Tang S."/>
            <person name="Taylor M.S."/>
            <person name="Tegner J."/>
            <person name="Teichmann S.A."/>
            <person name="Ueda H.R."/>
            <person name="van Nimwegen E."/>
            <person name="Verardo R."/>
            <person name="Wei C.L."/>
            <person name="Yagi K."/>
            <person name="Yamanishi H."/>
            <person name="Zabarovsky E."/>
            <person name="Zhu S."/>
            <person name="Zimmer A."/>
            <person name="Hide W."/>
            <person name="Bult C."/>
            <person name="Grimmond S.M."/>
            <person name="Teasdale R.D."/>
            <person name="Liu E.T."/>
            <person name="Brusic V."/>
            <person name="Quackenbush J."/>
            <person name="Wahlestedt C."/>
            <person name="Mattick J.S."/>
            <person name="Hume D.A."/>
            <person name="Kai C."/>
            <person name="Sasaki D."/>
            <person name="Tomaru Y."/>
            <person name="Fukuda S."/>
            <person name="Kanamori-Katayama M."/>
            <person name="Suzuki M."/>
            <person name="Aoki J."/>
            <person name="Arakawa T."/>
            <person name="Iida J."/>
            <person name="Imamura K."/>
            <person name="Itoh M."/>
            <person name="Kato T."/>
            <person name="Kawaji H."/>
            <person name="Kawagashira N."/>
            <person name="Kawashima T."/>
            <person name="Kojima M."/>
            <person name="Kondo S."/>
            <person name="Konno H."/>
            <person name="Nakano K."/>
            <person name="Ninomiya N."/>
            <person name="Nishio T."/>
            <person name="Okada M."/>
            <person name="Plessy C."/>
            <person name="Shibata K."/>
            <person name="Shiraki T."/>
            <person name="Suzuki S."/>
            <person name="Tagami M."/>
            <person name="Waki K."/>
            <person name="Watahiki A."/>
            <person name="Okamura-Oho Y."/>
            <person name="Suzuki H."/>
            <person name="Kawai J."/>
            <person name="Hayashizaki Y."/>
        </authorList>
    </citation>
    <scope>NUCLEOTIDE SEQUENCE [LARGE SCALE MRNA]</scope>
    <source>
        <strain>C57BL/6J</strain>
        <tissue>Testis</tissue>
    </source>
</reference>
<reference key="2">
    <citation type="journal article" date="2010" name="Cell">
        <title>A tissue-specific atlas of mouse protein phosphorylation and expression.</title>
        <authorList>
            <person name="Huttlin E.L."/>
            <person name="Jedrychowski M.P."/>
            <person name="Elias J.E."/>
            <person name="Goswami T."/>
            <person name="Rad R."/>
            <person name="Beausoleil S.A."/>
            <person name="Villen J."/>
            <person name="Haas W."/>
            <person name="Sowa M.E."/>
            <person name="Gygi S.P."/>
        </authorList>
    </citation>
    <scope>PHOSPHORYLATION [LARGE SCALE ANALYSIS] AT SER-84 AND SER-123</scope>
    <scope>IDENTIFICATION BY MASS SPECTROMETRY [LARGE SCALE ANALYSIS]</scope>
    <source>
        <tissue>Testis</tissue>
    </source>
</reference>
<evidence type="ECO:0000250" key="1">
    <source>
        <dbReference type="UniProtKB" id="Q3KR64"/>
    </source>
</evidence>
<evidence type="ECO:0000256" key="2">
    <source>
        <dbReference type="SAM" id="MobiDB-lite"/>
    </source>
</evidence>
<evidence type="ECO:0007744" key="3">
    <source>
    </source>
</evidence>
<protein>
    <recommendedName>
        <fullName>Uncharacterized protein CXorf49 homolog</fullName>
    </recommendedName>
</protein>
<feature type="chain" id="PRO_0000343896" description="Uncharacterized protein CXorf49 homolog">
    <location>
        <begin position="1"/>
        <end position="513"/>
    </location>
</feature>
<feature type="region of interest" description="Disordered" evidence="2">
    <location>
        <begin position="1"/>
        <end position="48"/>
    </location>
</feature>
<feature type="region of interest" description="Disordered" evidence="2">
    <location>
        <begin position="210"/>
        <end position="229"/>
    </location>
</feature>
<feature type="region of interest" description="Disordered" evidence="2">
    <location>
        <begin position="236"/>
        <end position="287"/>
    </location>
</feature>
<feature type="region of interest" description="Disordered" evidence="2">
    <location>
        <begin position="390"/>
        <end position="414"/>
    </location>
</feature>
<feature type="region of interest" description="Disordered" evidence="2">
    <location>
        <begin position="453"/>
        <end position="481"/>
    </location>
</feature>
<feature type="compositionally biased region" description="Polar residues" evidence="2">
    <location>
        <begin position="37"/>
        <end position="48"/>
    </location>
</feature>
<feature type="modified residue" description="Phosphoserine" evidence="1">
    <location>
        <position position="43"/>
    </location>
</feature>
<feature type="modified residue" description="Phosphoserine" evidence="3">
    <location>
        <position position="84"/>
    </location>
</feature>
<feature type="modified residue" description="Phosphoserine" evidence="3">
    <location>
        <position position="123"/>
    </location>
</feature>
<dbReference type="EMBL" id="AK016789">
    <property type="protein sequence ID" value="BAB30431.1"/>
    <property type="molecule type" value="mRNA"/>
</dbReference>
<dbReference type="CCDS" id="CCDS49612.1"/>
<dbReference type="RefSeq" id="NP_081944.1">
    <property type="nucleotide sequence ID" value="NM_027668.1"/>
</dbReference>
<dbReference type="SMR" id="Q9D454"/>
<dbReference type="GlyGen" id="Q9D454">
    <property type="glycosylation" value="2 sites, 1 O-linked glycan (1 site)"/>
</dbReference>
<dbReference type="iPTMnet" id="Q9D454"/>
<dbReference type="PhosphoSitePlus" id="Q9D454"/>
<dbReference type="SwissPalm" id="Q9D454"/>
<dbReference type="jPOST" id="Q9D454"/>
<dbReference type="PaxDb" id="10090-ENSMUSP00000094154"/>
<dbReference type="Ensembl" id="ENSMUST00000096421.4">
    <property type="protein sequence ID" value="ENSMUSP00000094154.3"/>
    <property type="gene ID" value="ENSMUSG00000071749.4"/>
</dbReference>
<dbReference type="GeneID" id="71088"/>
<dbReference type="KEGG" id="mmu:71088"/>
<dbReference type="UCSC" id="uc011ztd.1">
    <property type="organism name" value="mouse"/>
</dbReference>
<dbReference type="AGR" id="MGI:1918338"/>
<dbReference type="MGI" id="MGI:1918338">
    <property type="gene designation" value="4933412E24Rik"/>
</dbReference>
<dbReference type="VEuPathDB" id="HostDB:ENSMUSG00000071749"/>
<dbReference type="eggNOG" id="KOG3544">
    <property type="taxonomic scope" value="Eukaryota"/>
</dbReference>
<dbReference type="GeneTree" id="ENSGT00390000015252"/>
<dbReference type="HOGENOM" id="CLU_037026_1_0_1"/>
<dbReference type="InParanoid" id="Q9D454"/>
<dbReference type="OMA" id="ALNPCPG"/>
<dbReference type="OrthoDB" id="9629060at2759"/>
<dbReference type="PhylomeDB" id="Q9D454"/>
<dbReference type="TreeFam" id="TF339260"/>
<dbReference type="BioGRID-ORCS" id="71088">
    <property type="hits" value="4 hits in 78 CRISPR screens"/>
</dbReference>
<dbReference type="PRO" id="PR:Q9D454"/>
<dbReference type="Proteomes" id="UP000000589">
    <property type="component" value="Chromosome 15"/>
</dbReference>
<dbReference type="RNAct" id="Q9D454">
    <property type="molecule type" value="protein"/>
</dbReference>
<dbReference type="Bgee" id="ENSMUSG00000071749">
    <property type="expression patterns" value="Expressed in seminiferous tubule of testis and 5 other cell types or tissues"/>
</dbReference>
<dbReference type="InterPro" id="IPR027822">
    <property type="entry name" value="DUF4641"/>
</dbReference>
<dbReference type="PANTHER" id="PTHR31866:SF4">
    <property type="match status" value="1"/>
</dbReference>
<dbReference type="PANTHER" id="PTHR31866">
    <property type="entry name" value="GENE 4779-RELATED"/>
    <property type="match status" value="1"/>
</dbReference>
<dbReference type="Pfam" id="PF15483">
    <property type="entry name" value="DUF4641"/>
    <property type="match status" value="1"/>
</dbReference>
<name>CX049_MOUSE</name>